<accession>Q4RY26</accession>
<proteinExistence type="inferred from homology"/>
<comment type="function">
    <text evidence="1">Acts as an activator of hypoxia-induced mitophagy, an important mechanism for mitochondrial quality control.</text>
</comment>
<comment type="subcellular location">
    <subcellularLocation>
        <location evidence="1">Mitochondrion outer membrane</location>
        <topology evidence="1">Multi-pass membrane protein</topology>
    </subcellularLocation>
</comment>
<comment type="similarity">
    <text evidence="3">Belongs to the FUN14 family.</text>
</comment>
<sequence>MATVDHREAGQDDPESEDEVYEVVDLTEYARRHQWWSRVFGSNSGPIAEKYSVTTQLVMGGLTGWCAGYLFQRVGKIAATAVGGGFLLLQIANHSGYVQVDWKKVEKDVNKAKKRLKKKANKAVPEINTLIEEATDFIKKNIVLSGGFVGGFLLGLAS</sequence>
<gene>
    <name type="primary">fundc1</name>
    <name type="ORF">GSTENG00027182001</name>
</gene>
<reference key="1">
    <citation type="journal article" date="2004" name="Nature">
        <title>Genome duplication in the teleost fish Tetraodon nigroviridis reveals the early vertebrate proto-karyotype.</title>
        <authorList>
            <person name="Jaillon O."/>
            <person name="Aury J.-M."/>
            <person name="Brunet F."/>
            <person name="Petit J.-L."/>
            <person name="Stange-Thomann N."/>
            <person name="Mauceli E."/>
            <person name="Bouneau L."/>
            <person name="Fischer C."/>
            <person name="Ozouf-Costaz C."/>
            <person name="Bernot A."/>
            <person name="Nicaud S."/>
            <person name="Jaffe D."/>
            <person name="Fisher S."/>
            <person name="Lutfalla G."/>
            <person name="Dossat C."/>
            <person name="Segurens B."/>
            <person name="Dasilva C."/>
            <person name="Salanoubat M."/>
            <person name="Levy M."/>
            <person name="Boudet N."/>
            <person name="Castellano S."/>
            <person name="Anthouard V."/>
            <person name="Jubin C."/>
            <person name="Castelli V."/>
            <person name="Katinka M."/>
            <person name="Vacherie B."/>
            <person name="Biemont C."/>
            <person name="Skalli Z."/>
            <person name="Cattolico L."/>
            <person name="Poulain J."/>
            <person name="De Berardinis V."/>
            <person name="Cruaud C."/>
            <person name="Duprat S."/>
            <person name="Brottier P."/>
            <person name="Coutanceau J.-P."/>
            <person name="Gouzy J."/>
            <person name="Parra G."/>
            <person name="Lardier G."/>
            <person name="Chapple C."/>
            <person name="McKernan K.J."/>
            <person name="McEwan P."/>
            <person name="Bosak S."/>
            <person name="Kellis M."/>
            <person name="Volff J.-N."/>
            <person name="Guigo R."/>
            <person name="Zody M.C."/>
            <person name="Mesirov J."/>
            <person name="Lindblad-Toh K."/>
            <person name="Birren B."/>
            <person name="Nusbaum C."/>
            <person name="Kahn D."/>
            <person name="Robinson-Rechavi M."/>
            <person name="Laudet V."/>
            <person name="Schachter V."/>
            <person name="Quetier F."/>
            <person name="Saurin W."/>
            <person name="Scarpelli C."/>
            <person name="Wincker P."/>
            <person name="Lander E.S."/>
            <person name="Weissenbach J."/>
            <person name="Roest Crollius H."/>
        </authorList>
    </citation>
    <scope>NUCLEOTIDE SEQUENCE [LARGE SCALE GENOMIC DNA]</scope>
</reference>
<evidence type="ECO:0000250" key="1"/>
<evidence type="ECO:0000255" key="2"/>
<evidence type="ECO:0000305" key="3"/>
<name>FUND1_TETNG</name>
<dbReference type="EMBL" id="CAAE01014978">
    <property type="protein sequence ID" value="CAG06706.1"/>
    <property type="molecule type" value="Genomic_DNA"/>
</dbReference>
<dbReference type="SMR" id="Q4RY26"/>
<dbReference type="FunCoup" id="Q4RY26">
    <property type="interactions" value="248"/>
</dbReference>
<dbReference type="STRING" id="99883.ENSTNIP00000017566"/>
<dbReference type="Ensembl" id="ENSTNIT00000017786.1">
    <property type="protein sequence ID" value="ENSTNIP00000017566.1"/>
    <property type="gene ID" value="ENSTNIG00000014542.1"/>
</dbReference>
<dbReference type="KEGG" id="tng:GSTEN00027182G001"/>
<dbReference type="GeneTree" id="ENSGT00940000154517"/>
<dbReference type="HOGENOM" id="CLU_095425_2_0_1"/>
<dbReference type="InParanoid" id="Q4RY26"/>
<dbReference type="OMA" id="NAPPQEY"/>
<dbReference type="OrthoDB" id="163794at2759"/>
<dbReference type="TreeFam" id="TF300280"/>
<dbReference type="Proteomes" id="UP000007303">
    <property type="component" value="Unassembled WGS sequence"/>
</dbReference>
<dbReference type="GO" id="GO:0005741">
    <property type="term" value="C:mitochondrial outer membrane"/>
    <property type="evidence" value="ECO:0000250"/>
    <property type="project" value="UniProtKB"/>
</dbReference>
<dbReference type="GO" id="GO:0000422">
    <property type="term" value="P:autophagy of mitochondrion"/>
    <property type="evidence" value="ECO:0000250"/>
    <property type="project" value="UniProtKB"/>
</dbReference>
<dbReference type="GO" id="GO:0001666">
    <property type="term" value="P:response to hypoxia"/>
    <property type="evidence" value="ECO:0000250"/>
    <property type="project" value="UniProtKB"/>
</dbReference>
<dbReference type="InterPro" id="IPR007014">
    <property type="entry name" value="FUN14"/>
</dbReference>
<dbReference type="PANTHER" id="PTHR21346">
    <property type="entry name" value="FUN14 DOMAIN CONTAINING"/>
    <property type="match status" value="1"/>
</dbReference>
<dbReference type="PANTHER" id="PTHR21346:SF2">
    <property type="entry name" value="FUN14 DOMAIN-CONTAINING PROTEIN 1"/>
    <property type="match status" value="1"/>
</dbReference>
<dbReference type="Pfam" id="PF04930">
    <property type="entry name" value="FUN14"/>
    <property type="match status" value="1"/>
</dbReference>
<protein>
    <recommendedName>
        <fullName>FUN14 domain-containing protein 1</fullName>
    </recommendedName>
</protein>
<organism>
    <name type="scientific">Tetraodon nigroviridis</name>
    <name type="common">Spotted green pufferfish</name>
    <name type="synonym">Chelonodon nigroviridis</name>
    <dbReference type="NCBI Taxonomy" id="99883"/>
    <lineage>
        <taxon>Eukaryota</taxon>
        <taxon>Metazoa</taxon>
        <taxon>Chordata</taxon>
        <taxon>Craniata</taxon>
        <taxon>Vertebrata</taxon>
        <taxon>Euteleostomi</taxon>
        <taxon>Actinopterygii</taxon>
        <taxon>Neopterygii</taxon>
        <taxon>Teleostei</taxon>
        <taxon>Neoteleostei</taxon>
        <taxon>Acanthomorphata</taxon>
        <taxon>Eupercaria</taxon>
        <taxon>Tetraodontiformes</taxon>
        <taxon>Tetradontoidea</taxon>
        <taxon>Tetraodontidae</taxon>
        <taxon>Tetraodon</taxon>
    </lineage>
</organism>
<keyword id="KW-0072">Autophagy</keyword>
<keyword id="KW-0472">Membrane</keyword>
<keyword id="KW-0496">Mitochondrion</keyword>
<keyword id="KW-1000">Mitochondrion outer membrane</keyword>
<keyword id="KW-1185">Reference proteome</keyword>
<keyword id="KW-0812">Transmembrane</keyword>
<keyword id="KW-1133">Transmembrane helix</keyword>
<feature type="chain" id="PRO_0000271349" description="FUN14 domain-containing protein 1">
    <location>
        <begin position="1"/>
        <end position="158"/>
    </location>
</feature>
<feature type="transmembrane region" description="Helical" evidence="2">
    <location>
        <begin position="51"/>
        <end position="70"/>
    </location>
</feature>
<feature type="transmembrane region" description="Helical" evidence="2">
    <location>
        <begin position="77"/>
        <end position="98"/>
    </location>
</feature>
<feature type="short sequence motif" description="YXXL">
    <location>
        <begin position="21"/>
        <end position="24"/>
    </location>
</feature>